<keyword id="KW-0159">Chromosome partition</keyword>
<keyword id="KW-0507">mRNA processing</keyword>
<keyword id="KW-0539">Nucleus</keyword>
<keyword id="KW-1185">Reference proteome</keyword>
<keyword id="KW-0677">Repeat</keyword>
<keyword id="KW-0853">WD repeat</keyword>
<reference key="1">
    <citation type="journal article" date="2005" name="Nature">
        <title>Genome sequencing and analysis of Aspergillus oryzae.</title>
        <authorList>
            <person name="Machida M."/>
            <person name="Asai K."/>
            <person name="Sano M."/>
            <person name="Tanaka T."/>
            <person name="Kumagai T."/>
            <person name="Terai G."/>
            <person name="Kusumoto K."/>
            <person name="Arima T."/>
            <person name="Akita O."/>
            <person name="Kashiwagi Y."/>
            <person name="Abe K."/>
            <person name="Gomi K."/>
            <person name="Horiuchi H."/>
            <person name="Kitamoto K."/>
            <person name="Kobayashi T."/>
            <person name="Takeuchi M."/>
            <person name="Denning D.W."/>
            <person name="Galagan J.E."/>
            <person name="Nierman W.C."/>
            <person name="Yu J."/>
            <person name="Archer D.B."/>
            <person name="Bennett J.W."/>
            <person name="Bhatnagar D."/>
            <person name="Cleveland T.E."/>
            <person name="Fedorova N.D."/>
            <person name="Gotoh O."/>
            <person name="Horikawa H."/>
            <person name="Hosoyama A."/>
            <person name="Ichinomiya M."/>
            <person name="Igarashi R."/>
            <person name="Iwashita K."/>
            <person name="Juvvadi P.R."/>
            <person name="Kato M."/>
            <person name="Kato Y."/>
            <person name="Kin T."/>
            <person name="Kokubun A."/>
            <person name="Maeda H."/>
            <person name="Maeyama N."/>
            <person name="Maruyama J."/>
            <person name="Nagasaki H."/>
            <person name="Nakajima T."/>
            <person name="Oda K."/>
            <person name="Okada K."/>
            <person name="Paulsen I."/>
            <person name="Sakamoto K."/>
            <person name="Sawano T."/>
            <person name="Takahashi M."/>
            <person name="Takase K."/>
            <person name="Terabayashi Y."/>
            <person name="Wortman J.R."/>
            <person name="Yamada O."/>
            <person name="Yamagata Y."/>
            <person name="Anazawa H."/>
            <person name="Hata Y."/>
            <person name="Koide Y."/>
            <person name="Komori T."/>
            <person name="Koyama Y."/>
            <person name="Minetoki T."/>
            <person name="Suharnan S."/>
            <person name="Tanaka A."/>
            <person name="Isono K."/>
            <person name="Kuhara S."/>
            <person name="Ogasawara N."/>
            <person name="Kikuchi H."/>
        </authorList>
    </citation>
    <scope>NUCLEOTIDE SEQUENCE [LARGE SCALE GENOMIC DNA]</scope>
    <source>
        <strain>ATCC 42149 / RIB 40</strain>
    </source>
</reference>
<comment type="function">
    <text evidence="1">Required for 3'-end cleavage and polyadenylation of pre-mRNAs. Also involved in chromosome segregation where it has a role in chromosome attachment to the mitotic spindle (By similarity).</text>
</comment>
<comment type="subcellular location">
    <subcellularLocation>
        <location evidence="1">Nucleus</location>
    </subcellularLocation>
</comment>
<protein>
    <recommendedName>
        <fullName>Polyadenylation factor subunit 2</fullName>
    </recommendedName>
</protein>
<name>PFS2_ASPOR</name>
<gene>
    <name type="primary">pfs2</name>
    <name type="ORF">AO090011000862</name>
</gene>
<dbReference type="EMBL" id="BA000055">
    <property type="protein sequence ID" value="BAE65301.1"/>
    <property type="molecule type" value="Genomic_DNA"/>
</dbReference>
<dbReference type="SMR" id="Q2TZG4"/>
<dbReference type="STRING" id="510516.Q2TZG4"/>
<dbReference type="EnsemblFungi" id="BAE65301">
    <property type="protein sequence ID" value="BAE65301"/>
    <property type="gene ID" value="AO090011000862"/>
</dbReference>
<dbReference type="VEuPathDB" id="FungiDB:AO090011000862"/>
<dbReference type="HOGENOM" id="CLU_000288_77_1_1"/>
<dbReference type="OMA" id="YGSSMVQ"/>
<dbReference type="Proteomes" id="UP000006564">
    <property type="component" value="Chromosome 7"/>
</dbReference>
<dbReference type="GO" id="GO:0000785">
    <property type="term" value="C:chromatin"/>
    <property type="evidence" value="ECO:0007669"/>
    <property type="project" value="EnsemblFungi"/>
</dbReference>
<dbReference type="GO" id="GO:0005847">
    <property type="term" value="C:mRNA cleavage and polyadenylation specificity factor complex"/>
    <property type="evidence" value="ECO:0007669"/>
    <property type="project" value="EnsemblFungi"/>
</dbReference>
<dbReference type="GO" id="GO:0007059">
    <property type="term" value="P:chromosome segregation"/>
    <property type="evidence" value="ECO:0007669"/>
    <property type="project" value="UniProtKB-KW"/>
</dbReference>
<dbReference type="GO" id="GO:0180010">
    <property type="term" value="P:co-transcriptional mRNA 3'-end processing, cleavage and polyadenylation pathway"/>
    <property type="evidence" value="ECO:0007669"/>
    <property type="project" value="EnsemblFungi"/>
</dbReference>
<dbReference type="CDD" id="cd00200">
    <property type="entry name" value="WD40"/>
    <property type="match status" value="1"/>
</dbReference>
<dbReference type="FunFam" id="2.130.10.10:FF:002068">
    <property type="entry name" value="Polyadenylation factor subunit 2"/>
    <property type="match status" value="1"/>
</dbReference>
<dbReference type="FunFam" id="2.130.10.10:FF:003052">
    <property type="entry name" value="Polyadenylation factor subunit 2"/>
    <property type="match status" value="1"/>
</dbReference>
<dbReference type="Gene3D" id="2.130.10.10">
    <property type="entry name" value="YVTN repeat-like/Quinoprotein amine dehydrogenase"/>
    <property type="match status" value="2"/>
</dbReference>
<dbReference type="InterPro" id="IPR045245">
    <property type="entry name" value="Pfs2-like"/>
</dbReference>
<dbReference type="InterPro" id="IPR015943">
    <property type="entry name" value="WD40/YVTN_repeat-like_dom_sf"/>
</dbReference>
<dbReference type="InterPro" id="IPR036322">
    <property type="entry name" value="WD40_repeat_dom_sf"/>
</dbReference>
<dbReference type="InterPro" id="IPR001680">
    <property type="entry name" value="WD40_rpt"/>
</dbReference>
<dbReference type="PANTHER" id="PTHR22836:SF0">
    <property type="entry name" value="PRE-MRNA 3' END PROCESSING PROTEIN WDR33"/>
    <property type="match status" value="1"/>
</dbReference>
<dbReference type="PANTHER" id="PTHR22836">
    <property type="entry name" value="WD40 REPEAT PROTEIN"/>
    <property type="match status" value="1"/>
</dbReference>
<dbReference type="Pfam" id="PF00400">
    <property type="entry name" value="WD40"/>
    <property type="match status" value="6"/>
</dbReference>
<dbReference type="SMART" id="SM00320">
    <property type="entry name" value="WD40"/>
    <property type="match status" value="7"/>
</dbReference>
<dbReference type="SUPFAM" id="SSF50978">
    <property type="entry name" value="WD40 repeat-like"/>
    <property type="match status" value="1"/>
</dbReference>
<dbReference type="PROSITE" id="PS50082">
    <property type="entry name" value="WD_REPEATS_2"/>
    <property type="match status" value="6"/>
</dbReference>
<dbReference type="PROSITE" id="PS50294">
    <property type="entry name" value="WD_REPEATS_REGION"/>
    <property type="match status" value="1"/>
</dbReference>
<sequence length="610" mass="67397">MAFYDDSGADSQPFGRPQKPYEGGIVGPRRPRLVTDYGSSLVQWMRTRRPRYKGGHRMETERPSASYIVDMLPPLARIHSPVDTIPVRHLHQSIGKSKKPITVVRWTPEGRRLLTGGHTGEFMLWNGTAFNFETVMDAHYDQLQAGVTSLAWSHSHDWLISGGQKGDIKYWRPNFNNVETIDDAHHDAVRDLAWSPSDTKFLSASDDTTLKIFDFTSRTADTVLTGHNWDVKSCDWHPTKGLLVSGSKDHQVKFWDPRTARCLTTLHSHKNTVTATRFSRVNQNLLATSSRDQTARVFDLRMMRDICILRGHEKPVSSLTWHPIHSSLISTGSEDGSLYHYLLDEPNVPSGQIPTIAPYDSPDPANTPAQVIYPAHRVQYAHSATIWSLDWHPLGHILASGSKDNFTRFWSRARPGETSYMKDRFHIGEEAAEAQGTWSRGFGRRQMREEEEQELQDEAESLVDQRKPTGSVLPGIQIAPPGGTPHNDGLGSQLLPGIGAPQPPPAPSAGIPSSMPQMDPNRLAALLSTQGAPQPNSIPPNTGFPGFPMLPALSGTPPANVDLAELQKQLMSQGIPLPQNFAPQHFSPLPGTGGLPGLQGSNTPDNPYGR</sequence>
<feature type="chain" id="PRO_0000238497" description="Polyadenylation factor subunit 2">
    <location>
        <begin position="1"/>
        <end position="610"/>
    </location>
</feature>
<feature type="repeat" description="WD 1">
    <location>
        <begin position="96"/>
        <end position="135"/>
    </location>
</feature>
<feature type="repeat" description="WD 2">
    <location>
        <begin position="142"/>
        <end position="182"/>
    </location>
</feature>
<feature type="repeat" description="WD 3">
    <location>
        <begin position="184"/>
        <end position="223"/>
    </location>
</feature>
<feature type="repeat" description="WD 4">
    <location>
        <begin position="226"/>
        <end position="265"/>
    </location>
</feature>
<feature type="repeat" description="WD 5">
    <location>
        <begin position="268"/>
        <end position="308"/>
    </location>
</feature>
<feature type="repeat" description="WD 6">
    <location>
        <begin position="311"/>
        <end position="351"/>
    </location>
</feature>
<feature type="repeat" description="WD 7">
    <location>
        <begin position="381"/>
        <end position="420"/>
    </location>
</feature>
<feature type="region of interest" description="Disordered" evidence="2">
    <location>
        <begin position="1"/>
        <end position="29"/>
    </location>
</feature>
<feature type="region of interest" description="Disordered" evidence="2">
    <location>
        <begin position="480"/>
        <end position="519"/>
    </location>
</feature>
<feature type="region of interest" description="Disordered" evidence="2">
    <location>
        <begin position="574"/>
        <end position="610"/>
    </location>
</feature>
<feature type="compositionally biased region" description="Polar residues" evidence="2">
    <location>
        <begin position="601"/>
        <end position="610"/>
    </location>
</feature>
<evidence type="ECO:0000250" key="1"/>
<evidence type="ECO:0000256" key="2">
    <source>
        <dbReference type="SAM" id="MobiDB-lite"/>
    </source>
</evidence>
<proteinExistence type="inferred from homology"/>
<organism>
    <name type="scientific">Aspergillus oryzae (strain ATCC 42149 / RIB 40)</name>
    <name type="common">Yellow koji mold</name>
    <dbReference type="NCBI Taxonomy" id="510516"/>
    <lineage>
        <taxon>Eukaryota</taxon>
        <taxon>Fungi</taxon>
        <taxon>Dikarya</taxon>
        <taxon>Ascomycota</taxon>
        <taxon>Pezizomycotina</taxon>
        <taxon>Eurotiomycetes</taxon>
        <taxon>Eurotiomycetidae</taxon>
        <taxon>Eurotiales</taxon>
        <taxon>Aspergillaceae</taxon>
        <taxon>Aspergillus</taxon>
        <taxon>Aspergillus subgen. Circumdati</taxon>
    </lineage>
</organism>
<accession>Q2TZG4</accession>